<accession>A6ZZ54</accession>
<proteinExistence type="inferred from homology"/>
<evidence type="ECO:0000250" key="1"/>
<evidence type="ECO:0000255" key="2">
    <source>
        <dbReference type="PROSITE-ProRule" id="PRU00042"/>
    </source>
</evidence>
<evidence type="ECO:0000256" key="3">
    <source>
        <dbReference type="SAM" id="MobiDB-lite"/>
    </source>
</evidence>
<gene>
    <name type="primary">STP1</name>
    <name type="ORF">SCY_1343</name>
</gene>
<name>STP1_YEAS7</name>
<keyword id="KW-1003">Cell membrane</keyword>
<keyword id="KW-0238">DNA-binding</keyword>
<keyword id="KW-0472">Membrane</keyword>
<keyword id="KW-0479">Metal-binding</keyword>
<keyword id="KW-0539">Nucleus</keyword>
<keyword id="KW-0597">Phosphoprotein</keyword>
<keyword id="KW-0677">Repeat</keyword>
<keyword id="KW-0819">tRNA processing</keyword>
<keyword id="KW-0862">Zinc</keyword>
<keyword id="KW-0863">Zinc-finger</keyword>
<keyword id="KW-0865">Zymogen</keyword>
<organism>
    <name type="scientific">Saccharomyces cerevisiae (strain YJM789)</name>
    <name type="common">Baker's yeast</name>
    <dbReference type="NCBI Taxonomy" id="307796"/>
    <lineage>
        <taxon>Eukaryota</taxon>
        <taxon>Fungi</taxon>
        <taxon>Dikarya</taxon>
        <taxon>Ascomycota</taxon>
        <taxon>Saccharomycotina</taxon>
        <taxon>Saccharomycetes</taxon>
        <taxon>Saccharomycetales</taxon>
        <taxon>Saccharomycetaceae</taxon>
        <taxon>Saccharomyces</taxon>
    </lineage>
</organism>
<sequence length="519" mass="58088">MPSTTLLFPQKHIRAIPGKIYAFFRELVSGVIISKPDLSHHYSCENATKEEGKDAADEEKTTTSLFPESNNIDRSLNGGCSVIPCSMDVSDLNTPISITLSPENRIKSEVNAKSLLGSRPEQDTGAPIKMSTGVTSSPLSPSGSTPEHSTKVLNNGEEEFICHYCDATFRIRGYLTRHIKKHAIEKAYHCPFFNSATPPDLRCHNSGGFSRRDTYKTHLKARHVLYPKGVKPQDRNKSSGHCAQCGEYFSTIENFVENHIESGDCKALPQGYTKKNEKRSGKLRKIKTSNGHSRFISTSQSVVEPKVLFNKDAVEAMTIVANNSSGNDIISKYGNNKLMLNSENFKVDIPKRKRKYIKKKQQQVSGSTVTTPEVATQNNQEVAPDEISSATIFSPFDTHLLEPVPSSSSESSAEVMFHGKQMKNFLIDINSFTNQQQQAQDNPSFLPLDIEQSSYDLSEDAMSYPIISTQSNRDCTQYDNTKISQILQSQLNPEYLSENHMRETQQYLNFYNDNFGSQF</sequence>
<dbReference type="EMBL" id="AAFW02000145">
    <property type="protein sequence ID" value="EDN60784.1"/>
    <property type="molecule type" value="Genomic_DNA"/>
</dbReference>
<dbReference type="TopDownProteomics" id="A6ZZ54"/>
<dbReference type="HOGENOM" id="CLU_025391_0_0_1"/>
<dbReference type="Proteomes" id="UP000007060">
    <property type="component" value="Unassembled WGS sequence"/>
</dbReference>
<dbReference type="GO" id="GO:0005634">
    <property type="term" value="C:nucleus"/>
    <property type="evidence" value="ECO:0007669"/>
    <property type="project" value="UniProtKB-SubCell"/>
</dbReference>
<dbReference type="GO" id="GO:0005886">
    <property type="term" value="C:plasma membrane"/>
    <property type="evidence" value="ECO:0007669"/>
    <property type="project" value="UniProtKB-SubCell"/>
</dbReference>
<dbReference type="GO" id="GO:0000981">
    <property type="term" value="F:DNA-binding transcription factor activity, RNA polymerase II-specific"/>
    <property type="evidence" value="ECO:0007669"/>
    <property type="project" value="TreeGrafter"/>
</dbReference>
<dbReference type="GO" id="GO:0000978">
    <property type="term" value="F:RNA polymerase II cis-regulatory region sequence-specific DNA binding"/>
    <property type="evidence" value="ECO:0007669"/>
    <property type="project" value="TreeGrafter"/>
</dbReference>
<dbReference type="GO" id="GO:0008270">
    <property type="term" value="F:zinc ion binding"/>
    <property type="evidence" value="ECO:0007669"/>
    <property type="project" value="UniProtKB-KW"/>
</dbReference>
<dbReference type="GO" id="GO:0008033">
    <property type="term" value="P:tRNA processing"/>
    <property type="evidence" value="ECO:0007669"/>
    <property type="project" value="UniProtKB-KW"/>
</dbReference>
<dbReference type="FunFam" id="3.30.160.60:FF:002194">
    <property type="entry name" value="STP1p Transcription factor"/>
    <property type="match status" value="1"/>
</dbReference>
<dbReference type="Gene3D" id="3.30.160.60">
    <property type="entry name" value="Classic Zinc Finger"/>
    <property type="match status" value="1"/>
</dbReference>
<dbReference type="InterPro" id="IPR051643">
    <property type="entry name" value="Transcr_Reg_ZincFinger"/>
</dbReference>
<dbReference type="InterPro" id="IPR036236">
    <property type="entry name" value="Znf_C2H2_sf"/>
</dbReference>
<dbReference type="InterPro" id="IPR013087">
    <property type="entry name" value="Znf_C2H2_type"/>
</dbReference>
<dbReference type="PANTHER" id="PTHR24396:SF19">
    <property type="entry name" value="FI01119P"/>
    <property type="match status" value="1"/>
</dbReference>
<dbReference type="PANTHER" id="PTHR24396">
    <property type="entry name" value="ZINC FINGER PROTEIN"/>
    <property type="match status" value="1"/>
</dbReference>
<dbReference type="SMART" id="SM00355">
    <property type="entry name" value="ZnF_C2H2"/>
    <property type="match status" value="2"/>
</dbReference>
<dbReference type="SUPFAM" id="SSF57667">
    <property type="entry name" value="beta-beta-alpha zinc fingers"/>
    <property type="match status" value="1"/>
</dbReference>
<dbReference type="PROSITE" id="PS00028">
    <property type="entry name" value="ZINC_FINGER_C2H2_1"/>
    <property type="match status" value="1"/>
</dbReference>
<dbReference type="PROSITE" id="PS50157">
    <property type="entry name" value="ZINC_FINGER_C2H2_2"/>
    <property type="match status" value="1"/>
</dbReference>
<reference key="1">
    <citation type="journal article" date="2007" name="Proc. Natl. Acad. Sci. U.S.A.">
        <title>Genome sequencing and comparative analysis of Saccharomyces cerevisiae strain YJM789.</title>
        <authorList>
            <person name="Wei W."/>
            <person name="McCusker J.H."/>
            <person name="Hyman R.W."/>
            <person name="Jones T."/>
            <person name="Ning Y."/>
            <person name="Cao Z."/>
            <person name="Gu Z."/>
            <person name="Bruno D."/>
            <person name="Miranda M."/>
            <person name="Nguyen M."/>
            <person name="Wilhelmy J."/>
            <person name="Komp C."/>
            <person name="Tamse R."/>
            <person name="Wang X."/>
            <person name="Jia P."/>
            <person name="Luedi P."/>
            <person name="Oefner P.J."/>
            <person name="David L."/>
            <person name="Dietrich F.S."/>
            <person name="Li Y."/>
            <person name="Davis R.W."/>
            <person name="Steinmetz L.M."/>
        </authorList>
    </citation>
    <scope>NUCLEOTIDE SEQUENCE [LARGE SCALE GENOMIC DNA]</scope>
    <source>
        <strain>YJM789</strain>
    </source>
</reference>
<comment type="function">
    <text evidence="1">Transcription factor involved in the regulation of gene expression in response to extracellular amino acid levels. Synthesized as latent cytoplasmic precursor, which, upon a signal initiated by the plasma membrane SPS (SSY1-PTR3-SSY5) amino acid sensor system, becomes proteolytically activated and relocates to the nucleus, where it induces the expression of SPS-sensor-regulated genes, including the amino-acid permeases AGP1, BAP2, BAP3 and GNP1. Binding to promoters is facilitated by DAL81. Involved in the repression of genes subject to nitrogen catabolite repression and genes involved in stress response. Negatively regulated by inner nuclear membrane proteins ASI1, ASI2 and ASI3, which prevent unprocessed precursor forms that escape cytoplasmic anchoring from inducing SPS-sensor-regulated genes. May be involved in pre-tRNA splicing (By similarity).</text>
</comment>
<comment type="subunit">
    <text>Interacts (via Region II) with SSY5; protease component of the SPS-sensor.</text>
</comment>
<comment type="subcellular location">
    <subcellularLocation>
        <location evidence="1">Cell membrane</location>
        <topology evidence="1">Peripheral membrane protein</topology>
        <orientation evidence="1">Cytoplasmic side</orientation>
    </subcellularLocation>
    <subcellularLocation>
        <location evidence="1">Nucleus</location>
    </subcellularLocation>
    <text evidence="1">Localizes to the cytoplasm in its unprocessed form and is targeted to the nucleus after proteolytic processing upon induction by amino acids. The SCF(MET30) ubiquitin ligase complex negatively regulates nuclear accumulation of the processed form in the absence of high extracellular methionine levels (By similarity).</text>
</comment>
<comment type="domain">
    <text evidence="1">The N-terminal inhibitory domain contains conserved sequence elements important for cytoplasmic retention (Region I) and proteolytic processing (Region II) of the protein. Region I is also required for ASI1/2/3-mediated negative regulation of transcription (By similarity).</text>
</comment>
<comment type="PTM">
    <text evidence="1">Phosphorylated by casein kinase I. Phosphorylation is not dependent on the extracellular amino acid levels, but is a prerequisite for proteolytic processing (By similarity).</text>
</comment>
<comment type="PTM">
    <text evidence="1">Activated by the amino acid-induced proteolytic removal of an N-terminal inhibitory domain by serine protease SSY5, an intrinsic component of the SPS-sensor. Processing requires at least 2 components of the SCF(GRR1) ubiquitin ligase complex, namely the F-box protein GRR1 and the E2 enzyme CDC34, but does not depend on the proteasome. Processing is negatively regulated by the protein phosphatase 2A regulatory subunit RTS1 (By similarity).</text>
</comment>
<protein>
    <recommendedName>
        <fullName>Transcription factor STP1</fullName>
    </recommendedName>
</protein>
<feature type="propeptide" id="PRO_0000377647">
    <location>
        <begin position="1"/>
        <end status="unknown"/>
    </location>
</feature>
<feature type="chain" id="PRO_0000377648" description="Transcription factor STP1">
    <location>
        <begin status="unknown"/>
        <end position="519"/>
    </location>
</feature>
<feature type="zinc finger region" description="C2H2-type 1" evidence="2">
    <location>
        <begin position="160"/>
        <end position="182"/>
    </location>
</feature>
<feature type="zinc finger region" description="C2H2-type 2; atypical" evidence="2">
    <location>
        <begin position="188"/>
        <end position="223"/>
    </location>
</feature>
<feature type="zinc finger region" description="C2H2-type 3; atypical" evidence="2">
    <location>
        <begin position="240"/>
        <end position="265"/>
    </location>
</feature>
<feature type="region of interest" description="I">
    <location>
        <begin position="16"/>
        <end position="35"/>
    </location>
</feature>
<feature type="region of interest" description="Disordered" evidence="3">
    <location>
        <begin position="47"/>
        <end position="69"/>
    </location>
</feature>
<feature type="region of interest" description="II">
    <location>
        <begin position="65"/>
        <end position="97"/>
    </location>
</feature>
<feature type="region of interest" description="Disordered" evidence="3">
    <location>
        <begin position="115"/>
        <end position="150"/>
    </location>
</feature>
<feature type="region of interest" description="Disordered" evidence="3">
    <location>
        <begin position="357"/>
        <end position="382"/>
    </location>
</feature>
<feature type="compositionally biased region" description="Basic and acidic residues" evidence="3">
    <location>
        <begin position="47"/>
        <end position="61"/>
    </location>
</feature>
<feature type="compositionally biased region" description="Low complexity" evidence="3">
    <location>
        <begin position="131"/>
        <end position="146"/>
    </location>
</feature>
<feature type="compositionally biased region" description="Polar residues" evidence="3">
    <location>
        <begin position="364"/>
        <end position="381"/>
    </location>
</feature>